<name>ZGPAT_MOUSE</name>
<keyword id="KW-0007">Acetylation</keyword>
<keyword id="KW-0238">DNA-binding</keyword>
<keyword id="KW-0479">Metal-binding</keyword>
<keyword id="KW-0539">Nucleus</keyword>
<keyword id="KW-0597">Phosphoprotein</keyword>
<keyword id="KW-1185">Reference proteome</keyword>
<keyword id="KW-0678">Repressor</keyword>
<keyword id="KW-0804">Transcription</keyword>
<keyword id="KW-0805">Transcription regulation</keyword>
<keyword id="KW-0862">Zinc</keyword>
<keyword id="KW-0863">Zinc-finger</keyword>
<feature type="chain" id="PRO_0000213895" description="Zinc finger CCCH-type with G patch domain-containing protein">
    <location>
        <begin position="1"/>
        <end position="511"/>
    </location>
</feature>
<feature type="domain" description="G-patch" evidence="3">
    <location>
        <begin position="313"/>
        <end position="359"/>
    </location>
</feature>
<feature type="zinc finger region" description="C3H1-type" evidence="4">
    <location>
        <begin position="174"/>
        <end position="200"/>
    </location>
</feature>
<feature type="region of interest" description="Disordered" evidence="5">
    <location>
        <begin position="92"/>
        <end position="129"/>
    </location>
</feature>
<feature type="region of interest" description="Disordered" evidence="5">
    <location>
        <begin position="266"/>
        <end position="291"/>
    </location>
</feature>
<feature type="region of interest" description="Disordered" evidence="5">
    <location>
        <begin position="363"/>
        <end position="393"/>
    </location>
</feature>
<feature type="region of interest" description="Disordered" evidence="5">
    <location>
        <begin position="490"/>
        <end position="511"/>
    </location>
</feature>
<feature type="compositionally biased region" description="Polar residues" evidence="5">
    <location>
        <begin position="98"/>
        <end position="115"/>
    </location>
</feature>
<feature type="compositionally biased region" description="Acidic residues" evidence="5">
    <location>
        <begin position="116"/>
        <end position="127"/>
    </location>
</feature>
<feature type="compositionally biased region" description="Basic and acidic residues" evidence="5">
    <location>
        <begin position="491"/>
        <end position="511"/>
    </location>
</feature>
<feature type="modified residue" description="N-acetylmethionine" evidence="2">
    <location>
        <position position="1"/>
    </location>
</feature>
<feature type="modified residue" description="Phosphoserine" evidence="7">
    <location>
        <position position="70"/>
    </location>
</feature>
<feature type="modified residue" description="Phosphoserine" evidence="7">
    <location>
        <position position="276"/>
    </location>
</feature>
<feature type="modified residue" description="Phosphothreonine" evidence="7">
    <location>
        <position position="280"/>
    </location>
</feature>
<feature type="modified residue" description="Phosphoserine" evidence="7">
    <location>
        <position position="353"/>
    </location>
</feature>
<feature type="sequence conflict" description="In Ref. 2; BAC33909." evidence="6" ref="2">
    <original>R</original>
    <variation>Q</variation>
    <location>
        <position position="236"/>
    </location>
</feature>
<feature type="sequence conflict" description="In Ref. 2; BAE35381." evidence="6" ref="2">
    <original>I</original>
    <variation>T</variation>
    <location>
        <position position="264"/>
    </location>
</feature>
<gene>
    <name type="primary">Zgpat</name>
    <name type="synonym">Kiaa1847</name>
</gene>
<protein>
    <recommendedName>
        <fullName>Zinc finger CCCH-type with G patch domain-containing protein</fullName>
    </recommendedName>
</protein>
<accession>Q8VDM1</accession>
<accession>A2AU20</accession>
<accession>A2AU21</accession>
<accession>Q3TW85</accession>
<accession>Q69Z90</accession>
<accession>Q8BWW2</accession>
<reference key="1">
    <citation type="journal article" date="2004" name="DNA Res.">
        <title>Prediction of the coding sequences of mouse homologues of KIAA gene: IV. The complete nucleotide sequences of 500 mouse KIAA-homologous cDNAs identified by screening of terminal sequences of cDNA clones randomly sampled from size-fractionated libraries.</title>
        <authorList>
            <person name="Okazaki N."/>
            <person name="Kikuno R."/>
            <person name="Ohara R."/>
            <person name="Inamoto S."/>
            <person name="Koseki H."/>
            <person name="Hiraoka S."/>
            <person name="Saga Y."/>
            <person name="Seino S."/>
            <person name="Nishimura M."/>
            <person name="Kaisho T."/>
            <person name="Hoshino K."/>
            <person name="Kitamura H."/>
            <person name="Nagase T."/>
            <person name="Ohara O."/>
            <person name="Koga H."/>
        </authorList>
    </citation>
    <scope>NUCLEOTIDE SEQUENCE [LARGE SCALE MRNA]</scope>
    <source>
        <tissue>Fetal brain</tissue>
    </source>
</reference>
<reference key="2">
    <citation type="journal article" date="2005" name="Science">
        <title>The transcriptional landscape of the mammalian genome.</title>
        <authorList>
            <person name="Carninci P."/>
            <person name="Kasukawa T."/>
            <person name="Katayama S."/>
            <person name="Gough J."/>
            <person name="Frith M.C."/>
            <person name="Maeda N."/>
            <person name="Oyama R."/>
            <person name="Ravasi T."/>
            <person name="Lenhard B."/>
            <person name="Wells C."/>
            <person name="Kodzius R."/>
            <person name="Shimokawa K."/>
            <person name="Bajic V.B."/>
            <person name="Brenner S.E."/>
            <person name="Batalov S."/>
            <person name="Forrest A.R."/>
            <person name="Zavolan M."/>
            <person name="Davis M.J."/>
            <person name="Wilming L.G."/>
            <person name="Aidinis V."/>
            <person name="Allen J.E."/>
            <person name="Ambesi-Impiombato A."/>
            <person name="Apweiler R."/>
            <person name="Aturaliya R.N."/>
            <person name="Bailey T.L."/>
            <person name="Bansal M."/>
            <person name="Baxter L."/>
            <person name="Beisel K.W."/>
            <person name="Bersano T."/>
            <person name="Bono H."/>
            <person name="Chalk A.M."/>
            <person name="Chiu K.P."/>
            <person name="Choudhary V."/>
            <person name="Christoffels A."/>
            <person name="Clutterbuck D.R."/>
            <person name="Crowe M.L."/>
            <person name="Dalla E."/>
            <person name="Dalrymple B.P."/>
            <person name="de Bono B."/>
            <person name="Della Gatta G."/>
            <person name="di Bernardo D."/>
            <person name="Down T."/>
            <person name="Engstrom P."/>
            <person name="Fagiolini M."/>
            <person name="Faulkner G."/>
            <person name="Fletcher C.F."/>
            <person name="Fukushima T."/>
            <person name="Furuno M."/>
            <person name="Futaki S."/>
            <person name="Gariboldi M."/>
            <person name="Georgii-Hemming P."/>
            <person name="Gingeras T.R."/>
            <person name="Gojobori T."/>
            <person name="Green R.E."/>
            <person name="Gustincich S."/>
            <person name="Harbers M."/>
            <person name="Hayashi Y."/>
            <person name="Hensch T.K."/>
            <person name="Hirokawa N."/>
            <person name="Hill D."/>
            <person name="Huminiecki L."/>
            <person name="Iacono M."/>
            <person name="Ikeo K."/>
            <person name="Iwama A."/>
            <person name="Ishikawa T."/>
            <person name="Jakt M."/>
            <person name="Kanapin A."/>
            <person name="Katoh M."/>
            <person name="Kawasawa Y."/>
            <person name="Kelso J."/>
            <person name="Kitamura H."/>
            <person name="Kitano H."/>
            <person name="Kollias G."/>
            <person name="Krishnan S.P."/>
            <person name="Kruger A."/>
            <person name="Kummerfeld S.K."/>
            <person name="Kurochkin I.V."/>
            <person name="Lareau L.F."/>
            <person name="Lazarevic D."/>
            <person name="Lipovich L."/>
            <person name="Liu J."/>
            <person name="Liuni S."/>
            <person name="McWilliam S."/>
            <person name="Madan Babu M."/>
            <person name="Madera M."/>
            <person name="Marchionni L."/>
            <person name="Matsuda H."/>
            <person name="Matsuzawa S."/>
            <person name="Miki H."/>
            <person name="Mignone F."/>
            <person name="Miyake S."/>
            <person name="Morris K."/>
            <person name="Mottagui-Tabar S."/>
            <person name="Mulder N."/>
            <person name="Nakano N."/>
            <person name="Nakauchi H."/>
            <person name="Ng P."/>
            <person name="Nilsson R."/>
            <person name="Nishiguchi S."/>
            <person name="Nishikawa S."/>
            <person name="Nori F."/>
            <person name="Ohara O."/>
            <person name="Okazaki Y."/>
            <person name="Orlando V."/>
            <person name="Pang K.C."/>
            <person name="Pavan W.J."/>
            <person name="Pavesi G."/>
            <person name="Pesole G."/>
            <person name="Petrovsky N."/>
            <person name="Piazza S."/>
            <person name="Reed J."/>
            <person name="Reid J.F."/>
            <person name="Ring B.Z."/>
            <person name="Ringwald M."/>
            <person name="Rost B."/>
            <person name="Ruan Y."/>
            <person name="Salzberg S.L."/>
            <person name="Sandelin A."/>
            <person name="Schneider C."/>
            <person name="Schoenbach C."/>
            <person name="Sekiguchi K."/>
            <person name="Semple C.A."/>
            <person name="Seno S."/>
            <person name="Sessa L."/>
            <person name="Sheng Y."/>
            <person name="Shibata Y."/>
            <person name="Shimada H."/>
            <person name="Shimada K."/>
            <person name="Silva D."/>
            <person name="Sinclair B."/>
            <person name="Sperling S."/>
            <person name="Stupka E."/>
            <person name="Sugiura K."/>
            <person name="Sultana R."/>
            <person name="Takenaka Y."/>
            <person name="Taki K."/>
            <person name="Tammoja K."/>
            <person name="Tan S.L."/>
            <person name="Tang S."/>
            <person name="Taylor M.S."/>
            <person name="Tegner J."/>
            <person name="Teichmann S.A."/>
            <person name="Ueda H.R."/>
            <person name="van Nimwegen E."/>
            <person name="Verardo R."/>
            <person name="Wei C.L."/>
            <person name="Yagi K."/>
            <person name="Yamanishi H."/>
            <person name="Zabarovsky E."/>
            <person name="Zhu S."/>
            <person name="Zimmer A."/>
            <person name="Hide W."/>
            <person name="Bult C."/>
            <person name="Grimmond S.M."/>
            <person name="Teasdale R.D."/>
            <person name="Liu E.T."/>
            <person name="Brusic V."/>
            <person name="Quackenbush J."/>
            <person name="Wahlestedt C."/>
            <person name="Mattick J.S."/>
            <person name="Hume D.A."/>
            <person name="Kai C."/>
            <person name="Sasaki D."/>
            <person name="Tomaru Y."/>
            <person name="Fukuda S."/>
            <person name="Kanamori-Katayama M."/>
            <person name="Suzuki M."/>
            <person name="Aoki J."/>
            <person name="Arakawa T."/>
            <person name="Iida J."/>
            <person name="Imamura K."/>
            <person name="Itoh M."/>
            <person name="Kato T."/>
            <person name="Kawaji H."/>
            <person name="Kawagashira N."/>
            <person name="Kawashima T."/>
            <person name="Kojima M."/>
            <person name="Kondo S."/>
            <person name="Konno H."/>
            <person name="Nakano K."/>
            <person name="Ninomiya N."/>
            <person name="Nishio T."/>
            <person name="Okada M."/>
            <person name="Plessy C."/>
            <person name="Shibata K."/>
            <person name="Shiraki T."/>
            <person name="Suzuki S."/>
            <person name="Tagami M."/>
            <person name="Waki K."/>
            <person name="Watahiki A."/>
            <person name="Okamura-Oho Y."/>
            <person name="Suzuki H."/>
            <person name="Kawai J."/>
            <person name="Hayashizaki Y."/>
        </authorList>
    </citation>
    <scope>NUCLEOTIDE SEQUENCE [LARGE SCALE MRNA]</scope>
    <source>
        <strain>C57BL/6J</strain>
        <tissue>Heart</tissue>
        <tissue>Spinal cord</tissue>
        <tissue>Thymus</tissue>
    </source>
</reference>
<reference key="3">
    <citation type="journal article" date="2009" name="PLoS Biol.">
        <title>Lineage-specific biology revealed by a finished genome assembly of the mouse.</title>
        <authorList>
            <person name="Church D.M."/>
            <person name="Goodstadt L."/>
            <person name="Hillier L.W."/>
            <person name="Zody M.C."/>
            <person name="Goldstein S."/>
            <person name="She X."/>
            <person name="Bult C.J."/>
            <person name="Agarwala R."/>
            <person name="Cherry J.L."/>
            <person name="DiCuccio M."/>
            <person name="Hlavina W."/>
            <person name="Kapustin Y."/>
            <person name="Meric P."/>
            <person name="Maglott D."/>
            <person name="Birtle Z."/>
            <person name="Marques A.C."/>
            <person name="Graves T."/>
            <person name="Zhou S."/>
            <person name="Teague B."/>
            <person name="Potamousis K."/>
            <person name="Churas C."/>
            <person name="Place M."/>
            <person name="Herschleb J."/>
            <person name="Runnheim R."/>
            <person name="Forrest D."/>
            <person name="Amos-Landgraf J."/>
            <person name="Schwartz D.C."/>
            <person name="Cheng Z."/>
            <person name="Lindblad-Toh K."/>
            <person name="Eichler E.E."/>
            <person name="Ponting C.P."/>
        </authorList>
    </citation>
    <scope>NUCLEOTIDE SEQUENCE [LARGE SCALE GENOMIC DNA]</scope>
    <source>
        <strain>C57BL/6J</strain>
    </source>
</reference>
<reference key="4">
    <citation type="submission" date="2005-07" db="EMBL/GenBank/DDBJ databases">
        <authorList>
            <person name="Mural R.J."/>
            <person name="Adams M.D."/>
            <person name="Myers E.W."/>
            <person name="Smith H.O."/>
            <person name="Venter J.C."/>
        </authorList>
    </citation>
    <scope>NUCLEOTIDE SEQUENCE [LARGE SCALE GENOMIC DNA]</scope>
</reference>
<reference key="5">
    <citation type="journal article" date="2004" name="Genome Res.">
        <title>The status, quality, and expansion of the NIH full-length cDNA project: the Mammalian Gene Collection (MGC).</title>
        <authorList>
            <consortium name="The MGC Project Team"/>
        </authorList>
    </citation>
    <scope>NUCLEOTIDE SEQUENCE [LARGE SCALE MRNA]</scope>
    <source>
        <tissue>Mammary tumor</tissue>
    </source>
</reference>
<reference key="6">
    <citation type="journal article" date="2010" name="Cell">
        <title>A tissue-specific atlas of mouse protein phosphorylation and expression.</title>
        <authorList>
            <person name="Huttlin E.L."/>
            <person name="Jedrychowski M.P."/>
            <person name="Elias J.E."/>
            <person name="Goswami T."/>
            <person name="Rad R."/>
            <person name="Beausoleil S.A."/>
            <person name="Villen J."/>
            <person name="Haas W."/>
            <person name="Sowa M.E."/>
            <person name="Gygi S.P."/>
        </authorList>
    </citation>
    <scope>PHOSPHORYLATION [LARGE SCALE ANALYSIS] AT SER-70; SER-276; THR-280 AND SER-353</scope>
    <scope>IDENTIFICATION BY MASS SPECTROMETRY [LARGE SCALE ANALYSIS]</scope>
    <source>
        <tissue>Brain</tissue>
        <tissue>Heart</tissue>
        <tissue>Pancreas</tissue>
        <tissue>Testis</tissue>
    </source>
</reference>
<comment type="function">
    <text evidence="1">Transcription repressor that specifically binds the 5'-GGAG[GA]A[GA]A-3' consensus sequence. Represses transcription by recruiting the chromatin multiprotein complex NuRD to target promoters. Negatively regulates expression of EGFR, a gene involved in cell proliferation, survival and migration. Its ability to repress genes of the EGFR pathway suggest it may act as a tumor suppressor (By similarity).</text>
</comment>
<comment type="subunit">
    <text evidence="1">Interacts with CHD4/Mi-2; the interaction is direct.</text>
</comment>
<comment type="subcellular location">
    <subcellularLocation>
        <location evidence="1">Nucleus</location>
    </subcellularLocation>
</comment>
<comment type="sequence caution" evidence="6">
    <conflict type="miscellaneous discrepancy">
        <sequence resource="EMBL-CDS" id="BAD32554"/>
    </conflict>
    <text>The sequence differs from that shown because it seems to be derived from a pre-mRNA.</text>
</comment>
<comment type="sequence caution" evidence="6">
    <conflict type="erroneous gene model prediction">
        <sequence resource="EMBL-CDS" id="CAM26425"/>
    </conflict>
</comment>
<sequence>MDEDNLETALQTYRAQLQQVELALGAGLDASEQADLRQLQGDLKELIELTEASLLSVRKSKLLSTVDQESPAQEDAEYLAFQKAIAEEVEAPGAPCNDSETAPGSEVQPGSTSSALEEEEEDPDLEELSGAKVNAPYYSAWGTLEYHNAMVVGAEEAEDGSACVRVLYLYPTHKSLKPCPFFLEGKCRFKENCRFSHGQVVSVDELRPFQDPDLSLLQTGSACLAKHQDGLWHPARITDVDNGYYTVKFDSLLLKEAVVEGDSILPPLRTEATESSDSDTGDASDSSYARVVEPSTVDTGTCSSAFAGWEVHTRGIGSKLLVKMGYEFGKGLGRHAEGRVEPIHAVVLPRGKSLDQCAEILQKKTKRGQAGSNRPPKCRRSGSRPEGRPPPRNVFDFLNEKLQSQVPGTPDAGVDTPERRNKDMYHASKSAKQALSLQLFQTEEKIERTQRDIRGIQEALTRNTGRHNMTTAHLQEKLEGAQRQLGQLRAQEADLQRKQRKADTHRKMTEF</sequence>
<evidence type="ECO:0000250" key="1"/>
<evidence type="ECO:0000250" key="2">
    <source>
        <dbReference type="UniProtKB" id="Q8N5A5"/>
    </source>
</evidence>
<evidence type="ECO:0000255" key="3">
    <source>
        <dbReference type="PROSITE-ProRule" id="PRU00092"/>
    </source>
</evidence>
<evidence type="ECO:0000255" key="4">
    <source>
        <dbReference type="PROSITE-ProRule" id="PRU00723"/>
    </source>
</evidence>
<evidence type="ECO:0000256" key="5">
    <source>
        <dbReference type="SAM" id="MobiDB-lite"/>
    </source>
</evidence>
<evidence type="ECO:0000305" key="6"/>
<evidence type="ECO:0007744" key="7">
    <source>
    </source>
</evidence>
<proteinExistence type="evidence at protein level"/>
<organism>
    <name type="scientific">Mus musculus</name>
    <name type="common">Mouse</name>
    <dbReference type="NCBI Taxonomy" id="10090"/>
    <lineage>
        <taxon>Eukaryota</taxon>
        <taxon>Metazoa</taxon>
        <taxon>Chordata</taxon>
        <taxon>Craniata</taxon>
        <taxon>Vertebrata</taxon>
        <taxon>Euteleostomi</taxon>
        <taxon>Mammalia</taxon>
        <taxon>Eutheria</taxon>
        <taxon>Euarchontoglires</taxon>
        <taxon>Glires</taxon>
        <taxon>Rodentia</taxon>
        <taxon>Myomorpha</taxon>
        <taxon>Muroidea</taxon>
        <taxon>Muridae</taxon>
        <taxon>Murinae</taxon>
        <taxon>Mus</taxon>
        <taxon>Mus</taxon>
    </lineage>
</organism>
<dbReference type="EMBL" id="AK173276">
    <property type="protein sequence ID" value="BAD32554.1"/>
    <property type="status" value="ALT_SEQ"/>
    <property type="molecule type" value="Transcribed_RNA"/>
</dbReference>
<dbReference type="EMBL" id="AK041491">
    <property type="protein sequence ID" value="BAC30962.1"/>
    <property type="molecule type" value="mRNA"/>
</dbReference>
<dbReference type="EMBL" id="AK049764">
    <property type="protein sequence ID" value="BAC33909.1"/>
    <property type="molecule type" value="mRNA"/>
</dbReference>
<dbReference type="EMBL" id="AK052236">
    <property type="protein sequence ID" value="BAC34894.1"/>
    <property type="molecule type" value="mRNA"/>
</dbReference>
<dbReference type="EMBL" id="AK159801">
    <property type="protein sequence ID" value="BAE35381.1"/>
    <property type="molecule type" value="mRNA"/>
</dbReference>
<dbReference type="EMBL" id="AL928965">
    <property type="protein sequence ID" value="CAM26424.1"/>
    <property type="molecule type" value="Genomic_DNA"/>
</dbReference>
<dbReference type="EMBL" id="AL928965">
    <property type="protein sequence ID" value="CAM26425.1"/>
    <property type="status" value="ALT_SEQ"/>
    <property type="molecule type" value="Genomic_DNA"/>
</dbReference>
<dbReference type="EMBL" id="CH466626">
    <property type="protein sequence ID" value="EDL07412.1"/>
    <property type="molecule type" value="Genomic_DNA"/>
</dbReference>
<dbReference type="EMBL" id="BC021513">
    <property type="protein sequence ID" value="AAH21513.1"/>
    <property type="molecule type" value="mRNA"/>
</dbReference>
<dbReference type="EMBL" id="BC027218">
    <property type="protein sequence ID" value="AAH27218.1"/>
    <property type="molecule type" value="mRNA"/>
</dbReference>
<dbReference type="CCDS" id="CCDS17210.1"/>
<dbReference type="RefSeq" id="NP_001041613.1">
    <property type="nucleotide sequence ID" value="NM_001048148.1"/>
</dbReference>
<dbReference type="RefSeq" id="NP_659143.1">
    <property type="nucleotide sequence ID" value="NM_144894.3"/>
</dbReference>
<dbReference type="SMR" id="Q8VDM1"/>
<dbReference type="BioGRID" id="230809">
    <property type="interactions" value="1"/>
</dbReference>
<dbReference type="FunCoup" id="Q8VDM1">
    <property type="interactions" value="2771"/>
</dbReference>
<dbReference type="STRING" id="10090.ENSMUSP00000029105"/>
<dbReference type="iPTMnet" id="Q8VDM1"/>
<dbReference type="PhosphoSitePlus" id="Q8VDM1"/>
<dbReference type="SwissPalm" id="Q8VDM1"/>
<dbReference type="PaxDb" id="10090-ENSMUSP00000029105"/>
<dbReference type="PeptideAtlas" id="Q8VDM1"/>
<dbReference type="ProteomicsDB" id="275367"/>
<dbReference type="Pumba" id="Q8VDM1"/>
<dbReference type="Antibodypedia" id="29857">
    <property type="antibodies" value="119 antibodies from 26 providers"/>
</dbReference>
<dbReference type="DNASU" id="229007"/>
<dbReference type="Ensembl" id="ENSMUST00000029105.12">
    <property type="protein sequence ID" value="ENSMUSP00000029105.6"/>
    <property type="gene ID" value="ENSMUSG00000027582.17"/>
</dbReference>
<dbReference type="Ensembl" id="ENSMUST00000108807.9">
    <property type="protein sequence ID" value="ENSMUSP00000104435.3"/>
    <property type="gene ID" value="ENSMUSG00000027582.17"/>
</dbReference>
<dbReference type="Ensembl" id="ENSMUST00000116366.9">
    <property type="protein sequence ID" value="ENSMUSP00000112067.3"/>
    <property type="gene ID" value="ENSMUSG00000027582.17"/>
</dbReference>
<dbReference type="GeneID" id="229007"/>
<dbReference type="KEGG" id="mmu:229007"/>
<dbReference type="UCSC" id="uc008omb.1">
    <property type="organism name" value="mouse"/>
</dbReference>
<dbReference type="AGR" id="MGI:2449939"/>
<dbReference type="CTD" id="84619"/>
<dbReference type="MGI" id="MGI:2449939">
    <property type="gene designation" value="Zgpat"/>
</dbReference>
<dbReference type="VEuPathDB" id="HostDB:ENSMUSG00000027582"/>
<dbReference type="eggNOG" id="KOG2185">
    <property type="taxonomic scope" value="Eukaryota"/>
</dbReference>
<dbReference type="GeneTree" id="ENSGT00390000000732"/>
<dbReference type="HOGENOM" id="CLU_040504_1_0_1"/>
<dbReference type="InParanoid" id="Q8VDM1"/>
<dbReference type="OMA" id="QYTRGIG"/>
<dbReference type="OrthoDB" id="4822at2759"/>
<dbReference type="PhylomeDB" id="Q8VDM1"/>
<dbReference type="TreeFam" id="TF105970"/>
<dbReference type="BioGRID-ORCS" id="229007">
    <property type="hits" value="2 hits in 80 CRISPR screens"/>
</dbReference>
<dbReference type="ChiTaRS" id="Zgpat">
    <property type="organism name" value="mouse"/>
</dbReference>
<dbReference type="PRO" id="PR:Q8VDM1"/>
<dbReference type="Proteomes" id="UP000000589">
    <property type="component" value="Chromosome 2"/>
</dbReference>
<dbReference type="RNAct" id="Q8VDM1">
    <property type="molecule type" value="protein"/>
</dbReference>
<dbReference type="Bgee" id="ENSMUSG00000027582">
    <property type="expression patterns" value="Expressed in bronchus and 83 other cell types or tissues"/>
</dbReference>
<dbReference type="ExpressionAtlas" id="Q8VDM1">
    <property type="expression patterns" value="baseline and differential"/>
</dbReference>
<dbReference type="GO" id="GO:0005654">
    <property type="term" value="C:nucleoplasm"/>
    <property type="evidence" value="ECO:0007669"/>
    <property type="project" value="Ensembl"/>
</dbReference>
<dbReference type="GO" id="GO:0005634">
    <property type="term" value="C:nucleus"/>
    <property type="evidence" value="ECO:0000250"/>
    <property type="project" value="UniProtKB"/>
</dbReference>
<dbReference type="GO" id="GO:0005886">
    <property type="term" value="C:plasma membrane"/>
    <property type="evidence" value="ECO:0007669"/>
    <property type="project" value="Ensembl"/>
</dbReference>
<dbReference type="GO" id="GO:0003700">
    <property type="term" value="F:DNA-binding transcription factor activity"/>
    <property type="evidence" value="ECO:0000250"/>
    <property type="project" value="UniProtKB"/>
</dbReference>
<dbReference type="GO" id="GO:0001227">
    <property type="term" value="F:DNA-binding transcription repressor activity, RNA polymerase II-specific"/>
    <property type="evidence" value="ECO:0007669"/>
    <property type="project" value="Ensembl"/>
</dbReference>
<dbReference type="GO" id="GO:0000978">
    <property type="term" value="F:RNA polymerase II cis-regulatory region sequence-specific DNA binding"/>
    <property type="evidence" value="ECO:0007669"/>
    <property type="project" value="Ensembl"/>
</dbReference>
<dbReference type="GO" id="GO:0043565">
    <property type="term" value="F:sequence-specific DNA binding"/>
    <property type="evidence" value="ECO:0000250"/>
    <property type="project" value="UniProtKB"/>
</dbReference>
<dbReference type="GO" id="GO:0008270">
    <property type="term" value="F:zinc ion binding"/>
    <property type="evidence" value="ECO:0007669"/>
    <property type="project" value="UniProtKB-KW"/>
</dbReference>
<dbReference type="GO" id="GO:0045892">
    <property type="term" value="P:negative regulation of DNA-templated transcription"/>
    <property type="evidence" value="ECO:0000250"/>
    <property type="project" value="UniProtKB"/>
</dbReference>
<dbReference type="GO" id="GO:0007175">
    <property type="term" value="P:negative regulation of epidermal growth factor-activated receptor activity"/>
    <property type="evidence" value="ECO:0000250"/>
    <property type="project" value="UniProtKB"/>
</dbReference>
<dbReference type="CDD" id="cd20384">
    <property type="entry name" value="Tudor_ZGPAT"/>
    <property type="match status" value="1"/>
</dbReference>
<dbReference type="FunFam" id="2.30.30.140:FF:000071">
    <property type="entry name" value="Zinc finger CCCH-type with G patch domain-containing protein"/>
    <property type="match status" value="1"/>
</dbReference>
<dbReference type="FunFam" id="2.30.30.1190:FF:000001">
    <property type="entry name" value="zinc finger CCCH-type with G patch domain-containing protein"/>
    <property type="match status" value="1"/>
</dbReference>
<dbReference type="Gene3D" id="2.30.30.1190">
    <property type="match status" value="1"/>
</dbReference>
<dbReference type="Gene3D" id="2.30.30.140">
    <property type="match status" value="1"/>
</dbReference>
<dbReference type="InterPro" id="IPR000467">
    <property type="entry name" value="G_patch_dom"/>
</dbReference>
<dbReference type="InterPro" id="IPR041367">
    <property type="entry name" value="Znf-CCCH_4"/>
</dbReference>
<dbReference type="InterPro" id="IPR000571">
    <property type="entry name" value="Znf_CCCH"/>
</dbReference>
<dbReference type="InterPro" id="IPR036855">
    <property type="entry name" value="Znf_CCCH_sf"/>
</dbReference>
<dbReference type="PANTHER" id="PTHR46297">
    <property type="entry name" value="ZINC FINGER CCCH-TYPE WITH G PATCH DOMAIN-CONTAINING PROTEIN"/>
    <property type="match status" value="1"/>
</dbReference>
<dbReference type="PANTHER" id="PTHR46297:SF1">
    <property type="entry name" value="ZINC FINGER CCCH-TYPE WITH G PATCH DOMAIN-CONTAINING PROTEIN"/>
    <property type="match status" value="1"/>
</dbReference>
<dbReference type="Pfam" id="PF01585">
    <property type="entry name" value="G-patch"/>
    <property type="match status" value="1"/>
</dbReference>
<dbReference type="Pfam" id="PF18044">
    <property type="entry name" value="zf-CCCH_4"/>
    <property type="match status" value="1"/>
</dbReference>
<dbReference type="SMART" id="SM00443">
    <property type="entry name" value="G_patch"/>
    <property type="match status" value="1"/>
</dbReference>
<dbReference type="SMART" id="SM00356">
    <property type="entry name" value="ZnF_C3H1"/>
    <property type="match status" value="1"/>
</dbReference>
<dbReference type="SUPFAM" id="SSF90229">
    <property type="entry name" value="CCCH zinc finger"/>
    <property type="match status" value="1"/>
</dbReference>
<dbReference type="SUPFAM" id="SSF63748">
    <property type="entry name" value="Tudor/PWWP/MBT"/>
    <property type="match status" value="1"/>
</dbReference>
<dbReference type="PROSITE" id="PS50174">
    <property type="entry name" value="G_PATCH"/>
    <property type="match status" value="1"/>
</dbReference>
<dbReference type="PROSITE" id="PS50103">
    <property type="entry name" value="ZF_C3H1"/>
    <property type="match status" value="1"/>
</dbReference>